<feature type="chain" id="PRO_0000331923" description="Methionine--tRNA ligase">
    <location>
        <begin position="1"/>
        <end position="691"/>
    </location>
</feature>
<feature type="domain" description="tRNA-binding" evidence="1">
    <location>
        <begin position="585"/>
        <end position="691"/>
    </location>
</feature>
<feature type="short sequence motif" description="'HIGH' region">
    <location>
        <begin position="14"/>
        <end position="24"/>
    </location>
</feature>
<feature type="short sequence motif" description="'KMSKS' region">
    <location>
        <begin position="344"/>
        <end position="348"/>
    </location>
</feature>
<feature type="binding site" evidence="1">
    <location>
        <position position="148"/>
    </location>
    <ligand>
        <name>Zn(2+)</name>
        <dbReference type="ChEBI" id="CHEBI:29105"/>
    </ligand>
</feature>
<feature type="binding site" evidence="1">
    <location>
        <position position="151"/>
    </location>
    <ligand>
        <name>Zn(2+)</name>
        <dbReference type="ChEBI" id="CHEBI:29105"/>
    </ligand>
</feature>
<feature type="binding site" evidence="1">
    <location>
        <position position="161"/>
    </location>
    <ligand>
        <name>Zn(2+)</name>
        <dbReference type="ChEBI" id="CHEBI:29105"/>
    </ligand>
</feature>
<feature type="binding site" evidence="1">
    <location>
        <position position="164"/>
    </location>
    <ligand>
        <name>Zn(2+)</name>
        <dbReference type="ChEBI" id="CHEBI:29105"/>
    </ligand>
</feature>
<feature type="binding site" evidence="1">
    <location>
        <position position="347"/>
    </location>
    <ligand>
        <name>ATP</name>
        <dbReference type="ChEBI" id="CHEBI:30616"/>
    </ligand>
</feature>
<name>SYM_VEREI</name>
<dbReference type="EC" id="6.1.1.10" evidence="1"/>
<dbReference type="EMBL" id="CP000542">
    <property type="protein sequence ID" value="ABM60181.1"/>
    <property type="molecule type" value="Genomic_DNA"/>
</dbReference>
<dbReference type="RefSeq" id="WP_011812165.1">
    <property type="nucleotide sequence ID" value="NC_008786.1"/>
</dbReference>
<dbReference type="SMR" id="A1WRC4"/>
<dbReference type="STRING" id="391735.Veis_4480"/>
<dbReference type="GeneID" id="76462785"/>
<dbReference type="KEGG" id="vei:Veis_4480"/>
<dbReference type="eggNOG" id="COG0073">
    <property type="taxonomic scope" value="Bacteria"/>
</dbReference>
<dbReference type="eggNOG" id="COG0143">
    <property type="taxonomic scope" value="Bacteria"/>
</dbReference>
<dbReference type="HOGENOM" id="CLU_009710_7_0_4"/>
<dbReference type="OrthoDB" id="9810191at2"/>
<dbReference type="Proteomes" id="UP000000374">
    <property type="component" value="Chromosome"/>
</dbReference>
<dbReference type="GO" id="GO:0005829">
    <property type="term" value="C:cytosol"/>
    <property type="evidence" value="ECO:0007669"/>
    <property type="project" value="TreeGrafter"/>
</dbReference>
<dbReference type="GO" id="GO:0005524">
    <property type="term" value="F:ATP binding"/>
    <property type="evidence" value="ECO:0007669"/>
    <property type="project" value="UniProtKB-UniRule"/>
</dbReference>
<dbReference type="GO" id="GO:0046872">
    <property type="term" value="F:metal ion binding"/>
    <property type="evidence" value="ECO:0007669"/>
    <property type="project" value="UniProtKB-KW"/>
</dbReference>
<dbReference type="GO" id="GO:0004825">
    <property type="term" value="F:methionine-tRNA ligase activity"/>
    <property type="evidence" value="ECO:0007669"/>
    <property type="project" value="UniProtKB-UniRule"/>
</dbReference>
<dbReference type="GO" id="GO:0000049">
    <property type="term" value="F:tRNA binding"/>
    <property type="evidence" value="ECO:0007669"/>
    <property type="project" value="UniProtKB-KW"/>
</dbReference>
<dbReference type="GO" id="GO:0006431">
    <property type="term" value="P:methionyl-tRNA aminoacylation"/>
    <property type="evidence" value="ECO:0007669"/>
    <property type="project" value="UniProtKB-UniRule"/>
</dbReference>
<dbReference type="CDD" id="cd07957">
    <property type="entry name" value="Anticodon_Ia_Met"/>
    <property type="match status" value="1"/>
</dbReference>
<dbReference type="CDD" id="cd00814">
    <property type="entry name" value="MetRS_core"/>
    <property type="match status" value="1"/>
</dbReference>
<dbReference type="CDD" id="cd02800">
    <property type="entry name" value="tRNA_bind_EcMetRS_like"/>
    <property type="match status" value="1"/>
</dbReference>
<dbReference type="FunFam" id="2.20.28.20:FF:000001">
    <property type="entry name" value="Methionine--tRNA ligase"/>
    <property type="match status" value="1"/>
</dbReference>
<dbReference type="FunFam" id="2.40.50.140:FF:000042">
    <property type="entry name" value="Methionine--tRNA ligase"/>
    <property type="match status" value="1"/>
</dbReference>
<dbReference type="Gene3D" id="3.40.50.620">
    <property type="entry name" value="HUPs"/>
    <property type="match status" value="1"/>
</dbReference>
<dbReference type="Gene3D" id="1.10.730.10">
    <property type="entry name" value="Isoleucyl-tRNA Synthetase, Domain 1"/>
    <property type="match status" value="1"/>
</dbReference>
<dbReference type="Gene3D" id="2.20.28.20">
    <property type="entry name" value="Methionyl-tRNA synthetase, Zn-domain"/>
    <property type="match status" value="1"/>
</dbReference>
<dbReference type="Gene3D" id="2.40.50.140">
    <property type="entry name" value="Nucleic acid-binding proteins"/>
    <property type="match status" value="1"/>
</dbReference>
<dbReference type="HAMAP" id="MF_00098">
    <property type="entry name" value="Met_tRNA_synth_type1"/>
    <property type="match status" value="1"/>
</dbReference>
<dbReference type="InterPro" id="IPR001412">
    <property type="entry name" value="aa-tRNA-synth_I_CS"/>
</dbReference>
<dbReference type="InterPro" id="IPR041872">
    <property type="entry name" value="Anticodon_Met"/>
</dbReference>
<dbReference type="InterPro" id="IPR004495">
    <property type="entry name" value="Met-tRNA-synth_bsu_C"/>
</dbReference>
<dbReference type="InterPro" id="IPR023458">
    <property type="entry name" value="Met-tRNA_ligase_1"/>
</dbReference>
<dbReference type="InterPro" id="IPR014758">
    <property type="entry name" value="Met-tRNA_synth"/>
</dbReference>
<dbReference type="InterPro" id="IPR015413">
    <property type="entry name" value="Methionyl/Leucyl_tRNA_Synth"/>
</dbReference>
<dbReference type="InterPro" id="IPR033911">
    <property type="entry name" value="MetRS_core"/>
</dbReference>
<dbReference type="InterPro" id="IPR029038">
    <property type="entry name" value="MetRS_Zn"/>
</dbReference>
<dbReference type="InterPro" id="IPR012340">
    <property type="entry name" value="NA-bd_OB-fold"/>
</dbReference>
<dbReference type="InterPro" id="IPR014729">
    <property type="entry name" value="Rossmann-like_a/b/a_fold"/>
</dbReference>
<dbReference type="InterPro" id="IPR002547">
    <property type="entry name" value="tRNA-bd_dom"/>
</dbReference>
<dbReference type="InterPro" id="IPR009080">
    <property type="entry name" value="tRNAsynth_Ia_anticodon-bd"/>
</dbReference>
<dbReference type="NCBIfam" id="TIGR00398">
    <property type="entry name" value="metG"/>
    <property type="match status" value="1"/>
</dbReference>
<dbReference type="NCBIfam" id="NF001100">
    <property type="entry name" value="PRK00133.1"/>
    <property type="match status" value="1"/>
</dbReference>
<dbReference type="PANTHER" id="PTHR45765">
    <property type="entry name" value="METHIONINE--TRNA LIGASE"/>
    <property type="match status" value="1"/>
</dbReference>
<dbReference type="PANTHER" id="PTHR45765:SF1">
    <property type="entry name" value="METHIONINE--TRNA LIGASE, CYTOPLASMIC"/>
    <property type="match status" value="1"/>
</dbReference>
<dbReference type="Pfam" id="PF09334">
    <property type="entry name" value="tRNA-synt_1g"/>
    <property type="match status" value="1"/>
</dbReference>
<dbReference type="Pfam" id="PF01588">
    <property type="entry name" value="tRNA_bind"/>
    <property type="match status" value="1"/>
</dbReference>
<dbReference type="PRINTS" id="PR01041">
    <property type="entry name" value="TRNASYNTHMET"/>
</dbReference>
<dbReference type="SUPFAM" id="SSF47323">
    <property type="entry name" value="Anticodon-binding domain of a subclass of class I aminoacyl-tRNA synthetases"/>
    <property type="match status" value="1"/>
</dbReference>
<dbReference type="SUPFAM" id="SSF57770">
    <property type="entry name" value="Methionyl-tRNA synthetase (MetRS), Zn-domain"/>
    <property type="match status" value="1"/>
</dbReference>
<dbReference type="SUPFAM" id="SSF50249">
    <property type="entry name" value="Nucleic acid-binding proteins"/>
    <property type="match status" value="1"/>
</dbReference>
<dbReference type="SUPFAM" id="SSF52374">
    <property type="entry name" value="Nucleotidylyl transferase"/>
    <property type="match status" value="1"/>
</dbReference>
<dbReference type="PROSITE" id="PS00178">
    <property type="entry name" value="AA_TRNA_LIGASE_I"/>
    <property type="match status" value="1"/>
</dbReference>
<dbReference type="PROSITE" id="PS50886">
    <property type="entry name" value="TRBD"/>
    <property type="match status" value="1"/>
</dbReference>
<protein>
    <recommendedName>
        <fullName evidence="1">Methionine--tRNA ligase</fullName>
        <ecNumber evidence="1">6.1.1.10</ecNumber>
    </recommendedName>
    <alternativeName>
        <fullName evidence="1">Methionyl-tRNA synthetase</fullName>
        <shortName evidence="1">MetRS</shortName>
    </alternativeName>
</protein>
<sequence>MPSTRKLFVTTALPYANGPFHLGHLMEYIQADIWVRFQRMQGHEVNFVGADDTHGAPIMIAAEKAGKTPQQFVADIAAGRKPYLDGFHLSFDNWHSTDAPENHELARQIYRDLRDRADGSLIERRSIEQFFDPGKSMFLPDRYIVGECPRCHAKEQYGDNCEQCGSVYAPAELIDPVSALSGAKPELRSSEHFFFKLSDPRCVEFLQRWTQDGKLQPEVANKVREWFGLRSNPDGSCSEGLDDWDISRDAPYFGIEIPDAPGKYFYVWLDAPVGYLAALKNLLEKRGQNYDAYMADPALEQYHFIGKDIVTFHTLFWPAMLHLSGRKTPDNVFVHGFLTINGEKMSKSRGTGLDPLKYLSLGMNAEWLRYYLATKLSARNEDMDLGTEDFMVRVNSDLIGKYVNIASRAAGFLTKRFAGRLTSDFGAAGLALLADLHGARDTIAQWYQAREFGKATREIMLLADKVNAYVDRNKPWELAKDAANGQALHQVCSVLINAFATLTRYLSPVLPALARAAQDFVGQDMQRWDAGGAVQAIAPYQHLMQRVTPEQLAALFQPPAAAQIAAAGAQEPGGLALAPGIGIDDFDRVDLRVALIVDCAAVAGSTKLLRLTLDIGEGRQRQVFSGIASACQPADLIGKHTVMVANLAPRRLKFGVSEGMVLAASHGDEKANPGIYLLAPGPGAKPGMRVR</sequence>
<organism>
    <name type="scientific">Verminephrobacter eiseniae (strain EF01-2)</name>
    <dbReference type="NCBI Taxonomy" id="391735"/>
    <lineage>
        <taxon>Bacteria</taxon>
        <taxon>Pseudomonadati</taxon>
        <taxon>Pseudomonadota</taxon>
        <taxon>Betaproteobacteria</taxon>
        <taxon>Burkholderiales</taxon>
        <taxon>Comamonadaceae</taxon>
        <taxon>Verminephrobacter</taxon>
    </lineage>
</organism>
<evidence type="ECO:0000255" key="1">
    <source>
        <dbReference type="HAMAP-Rule" id="MF_00098"/>
    </source>
</evidence>
<gene>
    <name evidence="1" type="primary">metG</name>
    <name type="ordered locus">Veis_4480</name>
</gene>
<accession>A1WRC4</accession>
<reference key="1">
    <citation type="submission" date="2006-12" db="EMBL/GenBank/DDBJ databases">
        <title>Complete sequence of chromosome 1 of Verminephrobacter eiseniae EF01-2.</title>
        <authorList>
            <person name="Copeland A."/>
            <person name="Lucas S."/>
            <person name="Lapidus A."/>
            <person name="Barry K."/>
            <person name="Detter J.C."/>
            <person name="Glavina del Rio T."/>
            <person name="Dalin E."/>
            <person name="Tice H."/>
            <person name="Pitluck S."/>
            <person name="Chertkov O."/>
            <person name="Brettin T."/>
            <person name="Bruce D."/>
            <person name="Han C."/>
            <person name="Tapia R."/>
            <person name="Gilna P."/>
            <person name="Schmutz J."/>
            <person name="Larimer F."/>
            <person name="Land M."/>
            <person name="Hauser L."/>
            <person name="Kyrpides N."/>
            <person name="Kim E."/>
            <person name="Stahl D."/>
            <person name="Richardson P."/>
        </authorList>
    </citation>
    <scope>NUCLEOTIDE SEQUENCE [LARGE SCALE GENOMIC DNA]</scope>
    <source>
        <strain>EF01-2</strain>
    </source>
</reference>
<proteinExistence type="inferred from homology"/>
<comment type="function">
    <text evidence="1">Is required not only for elongation of protein synthesis but also for the initiation of all mRNA translation through initiator tRNA(fMet) aminoacylation.</text>
</comment>
<comment type="catalytic activity">
    <reaction evidence="1">
        <text>tRNA(Met) + L-methionine + ATP = L-methionyl-tRNA(Met) + AMP + diphosphate</text>
        <dbReference type="Rhea" id="RHEA:13481"/>
        <dbReference type="Rhea" id="RHEA-COMP:9667"/>
        <dbReference type="Rhea" id="RHEA-COMP:9698"/>
        <dbReference type="ChEBI" id="CHEBI:30616"/>
        <dbReference type="ChEBI" id="CHEBI:33019"/>
        <dbReference type="ChEBI" id="CHEBI:57844"/>
        <dbReference type="ChEBI" id="CHEBI:78442"/>
        <dbReference type="ChEBI" id="CHEBI:78530"/>
        <dbReference type="ChEBI" id="CHEBI:456215"/>
        <dbReference type="EC" id="6.1.1.10"/>
    </reaction>
</comment>
<comment type="cofactor">
    <cofactor evidence="1">
        <name>Zn(2+)</name>
        <dbReference type="ChEBI" id="CHEBI:29105"/>
    </cofactor>
    <text evidence="1">Binds 1 zinc ion per subunit.</text>
</comment>
<comment type="subunit">
    <text evidence="1">Homodimer.</text>
</comment>
<comment type="subcellular location">
    <subcellularLocation>
        <location evidence="1">Cytoplasm</location>
    </subcellularLocation>
</comment>
<comment type="similarity">
    <text evidence="1">Belongs to the class-I aminoacyl-tRNA synthetase family. MetG type 1 subfamily.</text>
</comment>
<keyword id="KW-0030">Aminoacyl-tRNA synthetase</keyword>
<keyword id="KW-0067">ATP-binding</keyword>
<keyword id="KW-0963">Cytoplasm</keyword>
<keyword id="KW-0436">Ligase</keyword>
<keyword id="KW-0479">Metal-binding</keyword>
<keyword id="KW-0547">Nucleotide-binding</keyword>
<keyword id="KW-0648">Protein biosynthesis</keyword>
<keyword id="KW-1185">Reference proteome</keyword>
<keyword id="KW-0694">RNA-binding</keyword>
<keyword id="KW-0820">tRNA-binding</keyword>
<keyword id="KW-0862">Zinc</keyword>